<name>IL12A_MARMO</name>
<evidence type="ECO:0000250" key="1"/>
<evidence type="ECO:0000250" key="2">
    <source>
        <dbReference type="UniProtKB" id="P29459"/>
    </source>
</evidence>
<evidence type="ECO:0000250" key="3">
    <source>
        <dbReference type="UniProtKB" id="P43431"/>
    </source>
</evidence>
<evidence type="ECO:0000255" key="4"/>
<evidence type="ECO:0000305" key="5"/>
<reference key="1">
    <citation type="submission" date="1996-04" db="EMBL/GenBank/DDBJ databases">
        <title>Molecular cloning of interleukin-12 from the woodchuck Marmota monax.</title>
        <authorList>
            <person name="Laxton C.D."/>
            <person name="Foster G.R."/>
            <person name="Shanmuganathan S."/>
            <person name="Mills J.S."/>
            <person name="Ackrill A.M."/>
        </authorList>
    </citation>
    <scope>NUCLEOTIDE SEQUENCE [MRNA]</scope>
    <source>
        <tissue>Peripheral blood</tissue>
    </source>
</reference>
<gene>
    <name type="primary">IL12A</name>
</gene>
<comment type="function">
    <text evidence="2 3">Heterodimerizes with IL12B to form the IL-12 cytokine or with EBI3/IL27B to form the IL-35 cytokine. IL-12 is primarily produced by professional antigen-presenting cells (APCs) such as B-cells and dendritic cells (DCs) as well as macrophages and granulocytes and regulates T-cell and natural killer-cell responses, induces the production of interferon-gamma (IFN-gamma), favors the differentiation of T-helper 1 (Th1) cells and is an important link between innate resistance and adaptive immunity. Mechanistically, exerts its biological effects through a receptor composed of IL12R1 and IL12R2 subunits. Binding to the receptor results in the rapid tyrosine phosphorylation of a number of cellular substrates including the JAK family kinases TYK2 and JAK2. In turn, recruited STAT4 gets phosphorylated and translocates to the nucleus where it regulates cytokine/growth factor responsive genes (By similarity). As part of IL-35, plays essential roles in maintaining the immune homeostasis of the liver microenvironment and also functions as an immune-suppressive cytokine (By similarity). Mediates biological events through unconventional receptors composed of IL12RB2 and gp130/IL6ST heterodimers or homodimers. Signaling requires the transcription factors STAT1 and STAT4, which form a unique heterodimer that binds to distinct DNA sites (By similarity).</text>
</comment>
<comment type="subunit">
    <text evidence="2 3">Heterodimer with IL12B; disulfide-linked. This heterodimer is known as interleukin IL-12. Heterodimer with EBI3/IL27B; not disulfide-linked. This heterodimer is known as interleukin IL-35. Interacts with NBR1; this interaction promotes IL-12 secretion (By similarity).</text>
</comment>
<comment type="subcellular location">
    <subcellularLocation>
        <location evidence="2">Secreted</location>
    </subcellularLocation>
</comment>
<comment type="similarity">
    <text evidence="5">Belongs to the IL-6 superfamily.</text>
</comment>
<feature type="signal peptide" evidence="1">
    <location>
        <begin position="1"/>
        <end position="23"/>
    </location>
</feature>
<feature type="chain" id="PRO_0000015607" description="Interleukin-12 subunit alpha">
    <location>
        <begin position="24"/>
        <end position="223"/>
    </location>
</feature>
<feature type="glycosylation site" description="N-linked (GlcNAc...) asparagine" evidence="4">
    <location>
        <position position="41"/>
    </location>
</feature>
<feature type="glycosylation site" description="N-linked (GlcNAc...) asparagine" evidence="4">
    <location>
        <position position="79"/>
    </location>
</feature>
<feature type="glycosylation site" description="N-linked (GlcNAc...) asparagine" evidence="4">
    <location>
        <position position="121"/>
    </location>
</feature>
<feature type="glycosylation site" description="N-linked (GlcNAc...) asparagine" evidence="4">
    <location>
        <position position="176"/>
    </location>
</feature>
<feature type="disulfide bond" evidence="1">
    <location>
        <begin position="66"/>
        <end position="200"/>
    </location>
</feature>
<feature type="disulfide bond" evidence="1">
    <location>
        <begin position="87"/>
        <end position="125"/>
    </location>
</feature>
<feature type="disulfide bond" description="Interchain (with C-199 in IL12B)" evidence="1">
    <location>
        <position position="98"/>
    </location>
</feature>
<accession>Q61728</accession>
<keyword id="KW-0202">Cytokine</keyword>
<keyword id="KW-1015">Disulfide bond</keyword>
<keyword id="KW-0325">Glycoprotein</keyword>
<keyword id="KW-0339">Growth factor</keyword>
<keyword id="KW-0964">Secreted</keyword>
<keyword id="KW-0732">Signal</keyword>
<protein>
    <recommendedName>
        <fullName>Interleukin-12 subunit alpha</fullName>
        <shortName>IL-12A</shortName>
    </recommendedName>
    <alternativeName>
        <fullName>Cytotoxic lymphocyte maturation factor 35 kDa subunit</fullName>
        <shortName>CLMF p35</shortName>
    </alternativeName>
    <alternativeName>
        <fullName>IL-12 subunit p35</fullName>
    </alternativeName>
</protein>
<dbReference type="EMBL" id="X97018">
    <property type="protein sequence ID" value="CAA65746.1"/>
    <property type="molecule type" value="mRNA"/>
</dbReference>
<dbReference type="SMR" id="Q61728"/>
<dbReference type="GlyCosmos" id="Q61728">
    <property type="glycosylation" value="4 sites, No reported glycans"/>
</dbReference>
<dbReference type="GO" id="GO:0005615">
    <property type="term" value="C:extracellular space"/>
    <property type="evidence" value="ECO:0007669"/>
    <property type="project" value="UniProtKB-KW"/>
</dbReference>
<dbReference type="GO" id="GO:0005125">
    <property type="term" value="F:cytokine activity"/>
    <property type="evidence" value="ECO:0007669"/>
    <property type="project" value="UniProtKB-KW"/>
</dbReference>
<dbReference type="GO" id="GO:0008083">
    <property type="term" value="F:growth factor activity"/>
    <property type="evidence" value="ECO:0007669"/>
    <property type="project" value="UniProtKB-KW"/>
</dbReference>
<dbReference type="GO" id="GO:0005143">
    <property type="term" value="F:interleukin-12 receptor binding"/>
    <property type="evidence" value="ECO:0007669"/>
    <property type="project" value="InterPro"/>
</dbReference>
<dbReference type="GO" id="GO:0006955">
    <property type="term" value="P:immune response"/>
    <property type="evidence" value="ECO:0007669"/>
    <property type="project" value="InterPro"/>
</dbReference>
<dbReference type="Gene3D" id="1.20.1250.10">
    <property type="match status" value="1"/>
</dbReference>
<dbReference type="InterPro" id="IPR009079">
    <property type="entry name" value="4_helix_cytokine-like_core"/>
</dbReference>
<dbReference type="InterPro" id="IPR050676">
    <property type="entry name" value="IL-12"/>
</dbReference>
<dbReference type="InterPro" id="IPR004281">
    <property type="entry name" value="IL-12_alpha"/>
</dbReference>
<dbReference type="PANTHER" id="PTHR48485:SF1">
    <property type="entry name" value="INTERLEUKIN-12 SUBUNIT ALPHA"/>
    <property type="match status" value="1"/>
</dbReference>
<dbReference type="PANTHER" id="PTHR48485">
    <property type="entry name" value="INTERLEUKIN-12 SUBUNIT BETA-RELATED"/>
    <property type="match status" value="1"/>
</dbReference>
<dbReference type="Pfam" id="PF03039">
    <property type="entry name" value="IL12"/>
    <property type="match status" value="1"/>
</dbReference>
<dbReference type="SUPFAM" id="SSF47266">
    <property type="entry name" value="4-helical cytokines"/>
    <property type="match status" value="1"/>
</dbReference>
<proteinExistence type="evidence at transcript level"/>
<sequence length="223" mass="24834">MCPSARSLLLLASLVLLEHLGSARNLPRSTPVPAVSQECHNLSQTLLSTVDSALQNAIEILEYYPCSAEEVNHEDITKNRTNTVKACLPQELAQNENCLASRETSFIIKRSSLTSGRTSWNTTLCFSSIYEDLKMYQLELKAISEKLLMDPKGQIYEDKALLAAVDYLMQAVNVNNETVPQTPSPEAPSSNLYRTKTKLCILLHALRIRAVTINRVMSYLNSS</sequence>
<organism>
    <name type="scientific">Marmota monax</name>
    <name type="common">Woodchuck</name>
    <dbReference type="NCBI Taxonomy" id="9995"/>
    <lineage>
        <taxon>Eukaryota</taxon>
        <taxon>Metazoa</taxon>
        <taxon>Chordata</taxon>
        <taxon>Craniata</taxon>
        <taxon>Vertebrata</taxon>
        <taxon>Euteleostomi</taxon>
        <taxon>Mammalia</taxon>
        <taxon>Eutheria</taxon>
        <taxon>Euarchontoglires</taxon>
        <taxon>Glires</taxon>
        <taxon>Rodentia</taxon>
        <taxon>Sciuromorpha</taxon>
        <taxon>Sciuridae</taxon>
        <taxon>Xerinae</taxon>
        <taxon>Marmotini</taxon>
        <taxon>Marmota</taxon>
    </lineage>
</organism>